<dbReference type="EMBL" id="CP000026">
    <property type="protein sequence ID" value="AAV77251.1"/>
    <property type="molecule type" value="Genomic_DNA"/>
</dbReference>
<dbReference type="RefSeq" id="WP_000841559.1">
    <property type="nucleotide sequence ID" value="NC_006511.1"/>
</dbReference>
<dbReference type="KEGG" id="spt:SPA1303"/>
<dbReference type="HOGENOM" id="CLU_210948_0_0_6"/>
<dbReference type="Proteomes" id="UP000008185">
    <property type="component" value="Chromosome"/>
</dbReference>
<dbReference type="GO" id="GO:0006412">
    <property type="term" value="P:translation"/>
    <property type="evidence" value="ECO:0007669"/>
    <property type="project" value="InterPro"/>
</dbReference>
<dbReference type="InterPro" id="IPR012607">
    <property type="entry name" value="SRA-like"/>
</dbReference>
<dbReference type="NCBIfam" id="NF007473">
    <property type="entry name" value="PRK10057.1"/>
    <property type="match status" value="1"/>
</dbReference>
<dbReference type="Pfam" id="PF08136">
    <property type="entry name" value="SRA_like"/>
    <property type="match status" value="1"/>
</dbReference>
<proteinExistence type="inferred from homology"/>
<reference key="1">
    <citation type="journal article" date="2004" name="Nat. Genet.">
        <title>Comparison of genome degradation in Paratyphi A and Typhi, human-restricted serovars of Salmonella enterica that cause typhoid.</title>
        <authorList>
            <person name="McClelland M."/>
            <person name="Sanderson K.E."/>
            <person name="Clifton S.W."/>
            <person name="Latreille P."/>
            <person name="Porwollik S."/>
            <person name="Sabo A."/>
            <person name="Meyer R."/>
            <person name="Bieri T."/>
            <person name="Ozersky P."/>
            <person name="McLellan M."/>
            <person name="Harkins C.R."/>
            <person name="Wang C."/>
            <person name="Nguyen C."/>
            <person name="Berghoff A."/>
            <person name="Elliott G."/>
            <person name="Kohlberg S."/>
            <person name="Strong C."/>
            <person name="Du F."/>
            <person name="Carter J."/>
            <person name="Kremizki C."/>
            <person name="Layman D."/>
            <person name="Leonard S."/>
            <person name="Sun H."/>
            <person name="Fulton L."/>
            <person name="Nash W."/>
            <person name="Miner T."/>
            <person name="Minx P."/>
            <person name="Delehaunty K."/>
            <person name="Fronick C."/>
            <person name="Magrini V."/>
            <person name="Nhan M."/>
            <person name="Warren W."/>
            <person name="Florea L."/>
            <person name="Spieth J."/>
            <person name="Wilson R.K."/>
        </authorList>
    </citation>
    <scope>NUCLEOTIDE SEQUENCE [LARGE SCALE GENOMIC DNA]</scope>
    <source>
        <strain>ATCC 9150 / SARB42</strain>
    </source>
</reference>
<protein>
    <recommendedName>
        <fullName>Stationary-phase-induced ribosome-associated protein</fullName>
        <shortName>SRA</shortName>
    </recommendedName>
    <alternativeName>
        <fullName>30S ribosomal protein S22</fullName>
    </alternativeName>
</protein>
<name>SRA_SALPA</name>
<accession>Q5PHY6</accession>
<organism>
    <name type="scientific">Salmonella paratyphi A (strain ATCC 9150 / SARB42)</name>
    <dbReference type="NCBI Taxonomy" id="295319"/>
    <lineage>
        <taxon>Bacteria</taxon>
        <taxon>Pseudomonadati</taxon>
        <taxon>Pseudomonadota</taxon>
        <taxon>Gammaproteobacteria</taxon>
        <taxon>Enterobacterales</taxon>
        <taxon>Enterobacteriaceae</taxon>
        <taxon>Salmonella</taxon>
    </lineage>
</organism>
<comment type="function">
    <text evidence="1">Although this protein associates with the 30S subunit of the ribosome it is not considered to be a bona fide ribosomal protein.</text>
</comment>
<comment type="subunit">
    <text evidence="1">Associates exclusively with the 30S subunit; there is 0.1 copy per ribosome in the exponential phase and 0.4 copies per ribosome in the stationary phase.</text>
</comment>
<comment type="similarity">
    <text evidence="3">Belongs to the SRA family.</text>
</comment>
<gene>
    <name type="primary">sra</name>
    <name type="synonym">rpsV</name>
    <name type="ordered locus">SPA1303</name>
</gene>
<sequence>MKSNRQARHILGLDYRISNQRKVVTEGDTSSVVNNPTGRKRRADSQK</sequence>
<evidence type="ECO:0000250" key="1"/>
<evidence type="ECO:0000256" key="2">
    <source>
        <dbReference type="SAM" id="MobiDB-lite"/>
    </source>
</evidence>
<evidence type="ECO:0000305" key="3"/>
<feature type="chain" id="PRO_0000287577" description="Stationary-phase-induced ribosome-associated protein">
    <location>
        <begin position="1"/>
        <end position="47"/>
    </location>
</feature>
<feature type="region of interest" description="Disordered" evidence="2">
    <location>
        <begin position="23"/>
        <end position="47"/>
    </location>
</feature>
<feature type="compositionally biased region" description="Polar residues" evidence="2">
    <location>
        <begin position="23"/>
        <end position="37"/>
    </location>
</feature>
<feature type="compositionally biased region" description="Basic residues" evidence="2">
    <location>
        <begin position="38"/>
        <end position="47"/>
    </location>
</feature>